<proteinExistence type="evidence at protein level"/>
<accession>Q8X1T0</accession>
<accession>Q9P7Y6</accession>
<dbReference type="EC" id="3.4.-.-"/>
<dbReference type="EMBL" id="AF237420">
    <property type="protein sequence ID" value="AAL55664.1"/>
    <property type="molecule type" value="Genomic_DNA"/>
</dbReference>
<dbReference type="EMBL" id="CU329670">
    <property type="protein sequence ID" value="CAB66315.2"/>
    <property type="molecule type" value="Genomic_DNA"/>
</dbReference>
<dbReference type="PIR" id="T50306">
    <property type="entry name" value="T50306"/>
</dbReference>
<dbReference type="RefSeq" id="NP_594707.2">
    <property type="nucleotide sequence ID" value="NM_001020134.2"/>
</dbReference>
<dbReference type="SMR" id="Q8X1T0"/>
<dbReference type="BioGRID" id="279374">
    <property type="interactions" value="20"/>
</dbReference>
<dbReference type="FunCoup" id="Q8X1T0">
    <property type="interactions" value="112"/>
</dbReference>
<dbReference type="STRING" id="284812.Q8X1T0"/>
<dbReference type="iPTMnet" id="Q8X1T0"/>
<dbReference type="PaxDb" id="4896-SPAPYUG7.06.1"/>
<dbReference type="EnsemblFungi" id="SPAPYUG7.06.1">
    <property type="protein sequence ID" value="SPAPYUG7.06.1:pep"/>
    <property type="gene ID" value="SPAPYUG7.06"/>
</dbReference>
<dbReference type="GeneID" id="2542933"/>
<dbReference type="KEGG" id="spo:2542933"/>
<dbReference type="PomBase" id="SPAPYUG7.06">
    <property type="gene designation" value="sdu1"/>
</dbReference>
<dbReference type="VEuPathDB" id="FungiDB:SPAPYUG7.06"/>
<dbReference type="eggNOG" id="KOG0324">
    <property type="taxonomic scope" value="Eukaryota"/>
</dbReference>
<dbReference type="HOGENOM" id="CLU_069001_5_2_1"/>
<dbReference type="InParanoid" id="Q8X1T0"/>
<dbReference type="OMA" id="PLEGCRW"/>
<dbReference type="PhylomeDB" id="Q8X1T0"/>
<dbReference type="PRO" id="PR:Q8X1T0"/>
<dbReference type="Proteomes" id="UP000002485">
    <property type="component" value="Chromosome I"/>
</dbReference>
<dbReference type="GO" id="GO:0005829">
    <property type="term" value="C:cytosol"/>
    <property type="evidence" value="ECO:0007005"/>
    <property type="project" value="PomBase"/>
</dbReference>
<dbReference type="GO" id="GO:0101005">
    <property type="term" value="F:deubiquitinase activity"/>
    <property type="evidence" value="ECO:0000269"/>
    <property type="project" value="PomBase"/>
</dbReference>
<dbReference type="GO" id="GO:0051321">
    <property type="term" value="P:meiotic cell cycle"/>
    <property type="evidence" value="ECO:0007669"/>
    <property type="project" value="UniProtKB-KW"/>
</dbReference>
<dbReference type="GO" id="GO:0006508">
    <property type="term" value="P:proteolysis"/>
    <property type="evidence" value="ECO:0007669"/>
    <property type="project" value="UniProtKB-KW"/>
</dbReference>
<dbReference type="Gene3D" id="3.90.1720.30">
    <property type="entry name" value="PPPDE domains"/>
    <property type="match status" value="1"/>
</dbReference>
<dbReference type="InterPro" id="IPR008580">
    <property type="entry name" value="PPPDE_dom"/>
</dbReference>
<dbReference type="InterPro" id="IPR042266">
    <property type="entry name" value="PPPDE_sf"/>
</dbReference>
<dbReference type="PANTHER" id="PTHR12378">
    <property type="entry name" value="DESUMOYLATING ISOPEPTIDASE"/>
    <property type="match status" value="1"/>
</dbReference>
<dbReference type="PANTHER" id="PTHR12378:SF80">
    <property type="entry name" value="IP06716P-RELATED"/>
    <property type="match status" value="1"/>
</dbReference>
<dbReference type="Pfam" id="PF05903">
    <property type="entry name" value="Peptidase_C97"/>
    <property type="match status" value="1"/>
</dbReference>
<dbReference type="SMART" id="SM01179">
    <property type="entry name" value="DUF862"/>
    <property type="match status" value="1"/>
</dbReference>
<dbReference type="PROSITE" id="PS51858">
    <property type="entry name" value="PPPDE"/>
    <property type="match status" value="1"/>
</dbReference>
<gene>
    <name type="primary">sdu1</name>
    <name type="synonym">hag1</name>
    <name type="synonym">mug67</name>
    <name type="ORF">SPAPYUG7.06</name>
</gene>
<name>SDU1_SCHPO</name>
<protein>
    <recommendedName>
        <fullName>DeSI-like protein sdu1</fullName>
        <ecNumber>3.4.-.-</ecNumber>
    </recommendedName>
    <alternativeName>
        <fullName>Meiotically up-regulated gene 67 protein</fullName>
    </alternativeName>
</protein>
<organism>
    <name type="scientific">Schizosaccharomyces pombe (strain 972 / ATCC 24843)</name>
    <name type="common">Fission yeast</name>
    <dbReference type="NCBI Taxonomy" id="284812"/>
    <lineage>
        <taxon>Eukaryota</taxon>
        <taxon>Fungi</taxon>
        <taxon>Dikarya</taxon>
        <taxon>Ascomycota</taxon>
        <taxon>Taphrinomycotina</taxon>
        <taxon>Schizosaccharomycetes</taxon>
        <taxon>Schizosaccharomycetales</taxon>
        <taxon>Schizosaccharomycetaceae</taxon>
        <taxon>Schizosaccharomyces</taxon>
    </lineage>
</organism>
<keyword id="KW-0963">Cytoplasm</keyword>
<keyword id="KW-0378">Hydrolase</keyword>
<keyword id="KW-0469">Meiosis</keyword>
<keyword id="KW-0645">Protease</keyword>
<keyword id="KW-1185">Reference proteome</keyword>
<evidence type="ECO:0000255" key="1">
    <source>
        <dbReference type="PROSITE-ProRule" id="PRU01205"/>
    </source>
</evidence>
<evidence type="ECO:0000256" key="2">
    <source>
        <dbReference type="SAM" id="MobiDB-lite"/>
    </source>
</evidence>
<evidence type="ECO:0000269" key="3">
    <source>
    </source>
</evidence>
<evidence type="ECO:0000269" key="4">
    <source>
    </source>
</evidence>
<evidence type="ECO:0000305" key="5"/>
<reference key="1">
    <citation type="journal article" date="2000" name="Bioorg. Khim.">
        <title>Chromosomal localization of the rpb9+ and tfa1+ genes encoding components of the mRNA synthesis machinery of Schizosaccharomyces pombe.</title>
        <authorList>
            <person name="Shpakovski G.V."/>
            <person name="Baranova G.M."/>
        </authorList>
    </citation>
    <scope>NUCLEOTIDE SEQUENCE [GENOMIC DNA]</scope>
    <source>
        <strain>972 / ATCC 24843</strain>
    </source>
</reference>
<reference key="2">
    <citation type="journal article" date="2002" name="Nature">
        <title>The genome sequence of Schizosaccharomyces pombe.</title>
        <authorList>
            <person name="Wood V."/>
            <person name="Gwilliam R."/>
            <person name="Rajandream M.A."/>
            <person name="Lyne M.H."/>
            <person name="Lyne R."/>
            <person name="Stewart A."/>
            <person name="Sgouros J.G."/>
            <person name="Peat N."/>
            <person name="Hayles J."/>
            <person name="Baker S.G."/>
            <person name="Basham D."/>
            <person name="Bowman S."/>
            <person name="Brooks K."/>
            <person name="Brown D."/>
            <person name="Brown S."/>
            <person name="Chillingworth T."/>
            <person name="Churcher C.M."/>
            <person name="Collins M."/>
            <person name="Connor R."/>
            <person name="Cronin A."/>
            <person name="Davis P."/>
            <person name="Feltwell T."/>
            <person name="Fraser A."/>
            <person name="Gentles S."/>
            <person name="Goble A."/>
            <person name="Hamlin N."/>
            <person name="Harris D.E."/>
            <person name="Hidalgo J."/>
            <person name="Hodgson G."/>
            <person name="Holroyd S."/>
            <person name="Hornsby T."/>
            <person name="Howarth S."/>
            <person name="Huckle E.J."/>
            <person name="Hunt S."/>
            <person name="Jagels K."/>
            <person name="James K.D."/>
            <person name="Jones L."/>
            <person name="Jones M."/>
            <person name="Leather S."/>
            <person name="McDonald S."/>
            <person name="McLean J."/>
            <person name="Mooney P."/>
            <person name="Moule S."/>
            <person name="Mungall K.L."/>
            <person name="Murphy L.D."/>
            <person name="Niblett D."/>
            <person name="Odell C."/>
            <person name="Oliver K."/>
            <person name="O'Neil S."/>
            <person name="Pearson D."/>
            <person name="Quail M.A."/>
            <person name="Rabbinowitsch E."/>
            <person name="Rutherford K.M."/>
            <person name="Rutter S."/>
            <person name="Saunders D."/>
            <person name="Seeger K."/>
            <person name="Sharp S."/>
            <person name="Skelton J."/>
            <person name="Simmonds M.N."/>
            <person name="Squares R."/>
            <person name="Squares S."/>
            <person name="Stevens K."/>
            <person name="Taylor K."/>
            <person name="Taylor R.G."/>
            <person name="Tivey A."/>
            <person name="Walsh S.V."/>
            <person name="Warren T."/>
            <person name="Whitehead S."/>
            <person name="Woodward J.R."/>
            <person name="Volckaert G."/>
            <person name="Aert R."/>
            <person name="Robben J."/>
            <person name="Grymonprez B."/>
            <person name="Weltjens I."/>
            <person name="Vanstreels E."/>
            <person name="Rieger M."/>
            <person name="Schaefer M."/>
            <person name="Mueller-Auer S."/>
            <person name="Gabel C."/>
            <person name="Fuchs M."/>
            <person name="Duesterhoeft A."/>
            <person name="Fritzc C."/>
            <person name="Holzer E."/>
            <person name="Moestl D."/>
            <person name="Hilbert H."/>
            <person name="Borzym K."/>
            <person name="Langer I."/>
            <person name="Beck A."/>
            <person name="Lehrach H."/>
            <person name="Reinhardt R."/>
            <person name="Pohl T.M."/>
            <person name="Eger P."/>
            <person name="Zimmermann W."/>
            <person name="Wedler H."/>
            <person name="Wambutt R."/>
            <person name="Purnelle B."/>
            <person name="Goffeau A."/>
            <person name="Cadieu E."/>
            <person name="Dreano S."/>
            <person name="Gloux S."/>
            <person name="Lelaure V."/>
            <person name="Mottier S."/>
            <person name="Galibert F."/>
            <person name="Aves S.J."/>
            <person name="Xiang Z."/>
            <person name="Hunt C."/>
            <person name="Moore K."/>
            <person name="Hurst S.M."/>
            <person name="Lucas M."/>
            <person name="Rochet M."/>
            <person name="Gaillardin C."/>
            <person name="Tallada V.A."/>
            <person name="Garzon A."/>
            <person name="Thode G."/>
            <person name="Daga R.R."/>
            <person name="Cruzado L."/>
            <person name="Jimenez J."/>
            <person name="Sanchez M."/>
            <person name="del Rey F."/>
            <person name="Benito J."/>
            <person name="Dominguez A."/>
            <person name="Revuelta J.L."/>
            <person name="Moreno S."/>
            <person name="Armstrong J."/>
            <person name="Forsburg S.L."/>
            <person name="Cerutti L."/>
            <person name="Lowe T."/>
            <person name="McCombie W.R."/>
            <person name="Paulsen I."/>
            <person name="Potashkin J."/>
            <person name="Shpakovski G.V."/>
            <person name="Ussery D."/>
            <person name="Barrell B.G."/>
            <person name="Nurse P."/>
        </authorList>
    </citation>
    <scope>NUCLEOTIDE SEQUENCE [LARGE SCALE GENOMIC DNA]</scope>
    <source>
        <strain>972 / ATCC 24843</strain>
    </source>
</reference>
<reference key="3">
    <citation type="journal article" date="2005" name="Curr. Biol.">
        <title>A large-scale screen in S. pombe identifies seven novel genes required for critical meiotic events.</title>
        <authorList>
            <person name="Martin-Castellanos C."/>
            <person name="Blanco M."/>
            <person name="Rozalen A.E."/>
            <person name="Perez-Hidalgo L."/>
            <person name="Garcia A.I."/>
            <person name="Conde F."/>
            <person name="Mata J."/>
            <person name="Ellermeier C."/>
            <person name="Davis L."/>
            <person name="San-Segundo P."/>
            <person name="Smith G.R."/>
            <person name="Moreno S."/>
        </authorList>
    </citation>
    <scope>FUNCTION IN MEIOSIS</scope>
</reference>
<reference key="4">
    <citation type="journal article" date="2006" name="Nat. Biotechnol.">
        <title>ORFeome cloning and global analysis of protein localization in the fission yeast Schizosaccharomyces pombe.</title>
        <authorList>
            <person name="Matsuyama A."/>
            <person name="Arai R."/>
            <person name="Yashiroda Y."/>
            <person name="Shirai A."/>
            <person name="Kamata A."/>
            <person name="Sekido S."/>
            <person name="Kobayashi Y."/>
            <person name="Hashimoto A."/>
            <person name="Hamamoto M."/>
            <person name="Hiraoka Y."/>
            <person name="Horinouchi S."/>
            <person name="Yoshida M."/>
        </authorList>
    </citation>
    <scope>SUBCELLULAR LOCATION [LARGE SCALE ANALYSIS]</scope>
</reference>
<comment type="function">
    <text evidence="3">Has a role in meiosis.</text>
</comment>
<comment type="subcellular location">
    <subcellularLocation>
        <location evidence="4">Cytoplasm</location>
    </subcellularLocation>
</comment>
<comment type="similarity">
    <text evidence="5">Belongs to the DeSI family.</text>
</comment>
<feature type="chain" id="PRO_0000221634" description="DeSI-like protein sdu1">
    <location>
        <begin position="1"/>
        <end position="201"/>
    </location>
</feature>
<feature type="domain" description="PPPDE" evidence="1">
    <location>
        <begin position="1"/>
        <end position="143"/>
    </location>
</feature>
<feature type="region of interest" description="Disordered" evidence="2">
    <location>
        <begin position="146"/>
        <end position="201"/>
    </location>
</feature>
<feature type="compositionally biased region" description="Acidic residues" evidence="2">
    <location>
        <begin position="152"/>
        <end position="167"/>
    </location>
</feature>
<feature type="compositionally biased region" description="Polar residues" evidence="2">
    <location>
        <begin position="191"/>
        <end position="201"/>
    </location>
</feature>
<feature type="active site" evidence="1">
    <location>
        <position position="29"/>
    </location>
</feature>
<feature type="active site" evidence="1">
    <location>
        <position position="105"/>
    </location>
</feature>
<sequence length="201" mass="21952">MKVYINVYDLMPDSPVNKLAWTLGLGIYHTGLVLEGKEYAFGAHEIPGSTGVFATMPRPPLEGCRWRCSIALPNCTLPKPDVDRILIRLSQEFTGLSYSLLERNCNHFTNAAAIELTGSPIPSFLNRISRIGLAFPTITNALLQHGQKNTSDVDDSSDSSSDVDEETLIVSKSKKAHKDIPKFSAPPPSADLNNLITDSLP</sequence>